<sequence>GVYVIEEDVATYTIK</sequence>
<dbReference type="EC" id="1.3.1.-"/>
<dbReference type="GO" id="GO:0005737">
    <property type="term" value="C:cytoplasm"/>
    <property type="evidence" value="ECO:0007669"/>
    <property type="project" value="UniProtKB-SubCell"/>
</dbReference>
<dbReference type="GO" id="GO:0016491">
    <property type="term" value="F:oxidoreductase activity"/>
    <property type="evidence" value="ECO:0007669"/>
    <property type="project" value="UniProtKB-KW"/>
</dbReference>
<protein>
    <recommendedName>
        <fullName evidence="1 3">Isoflavone reductase homolog 1</fullName>
        <ecNumber>1.3.1.-</ecNumber>
    </recommendedName>
</protein>
<accession>P85947</accession>
<organism>
    <name type="scientific">Pseudotsuga menziesii</name>
    <name type="common">Douglas-fir</name>
    <name type="synonym">Abies menziesii</name>
    <dbReference type="NCBI Taxonomy" id="3357"/>
    <lineage>
        <taxon>Eukaryota</taxon>
        <taxon>Viridiplantae</taxon>
        <taxon>Streptophyta</taxon>
        <taxon>Embryophyta</taxon>
        <taxon>Tracheophyta</taxon>
        <taxon>Spermatophyta</taxon>
        <taxon>Pinopsida</taxon>
        <taxon>Pinidae</taxon>
        <taxon>Conifers I</taxon>
        <taxon>Pinales</taxon>
        <taxon>Pinaceae</taxon>
        <taxon>Pseudotsuga</taxon>
    </lineage>
</organism>
<evidence type="ECO:0000250" key="1">
    <source>
        <dbReference type="UniProtKB" id="P52580"/>
    </source>
</evidence>
<evidence type="ECO:0000255" key="2"/>
<evidence type="ECO:0000303" key="3">
    <source>
    </source>
</evidence>
<evidence type="ECO:0000305" key="4"/>
<name>IFRH1_PSEMZ</name>
<keyword id="KW-0963">Cytoplasm</keyword>
<keyword id="KW-0521">NADP</keyword>
<keyword id="KW-0560">Oxidoreductase</keyword>
<proteinExistence type="evidence at protein level"/>
<comment type="subcellular location">
    <subcellularLocation>
        <location evidence="1">Cytoplasm</location>
    </subcellularLocation>
</comment>
<comment type="similarity">
    <text evidence="2">Belongs to the NmrA-type oxidoreductase family. Isoflavone reductase subfamily.</text>
</comment>
<feature type="chain" id="PRO_0000397949" description="Isoflavone reductase homolog 1">
    <location>
        <begin position="1" status="less than"/>
        <end position="15" status="greater than"/>
    </location>
</feature>
<feature type="non-terminal residue" evidence="3">
    <location>
        <position position="1"/>
    </location>
</feature>
<feature type="non-terminal residue" evidence="3">
    <location>
        <position position="15"/>
    </location>
</feature>
<reference evidence="4" key="1">
    <citation type="journal article" date="2008" name="J. Proteomics">
        <title>A proteomics approach to identify proteins differentially expressed in Douglas-fir seedlings infected by Phellinus sulphurascens.</title>
        <authorList>
            <person name="Islam M.A."/>
            <person name="Sturrock R.N."/>
            <person name="Ekramoddoullah A.K.M."/>
        </authorList>
    </citation>
    <scope>IDENTIFICATION BY MASS SPECTROMETRY</scope>
</reference>